<organism>
    <name type="scientific">Citrobacter rodentium (strain ICC168)</name>
    <name type="common">Citrobacter freundii biotype 4280</name>
    <dbReference type="NCBI Taxonomy" id="637910"/>
    <lineage>
        <taxon>Bacteria</taxon>
        <taxon>Pseudomonadati</taxon>
        <taxon>Pseudomonadota</taxon>
        <taxon>Gammaproteobacteria</taxon>
        <taxon>Enterobacterales</taxon>
        <taxon>Enterobacteriaceae</taxon>
        <taxon>Citrobacter</taxon>
    </lineage>
</organism>
<sequence length="1259" mass="136339">MSLWKKISLGVLIFILLLLATVGFLVGTTTGLHLVFSAANRWVPGLEIGQVTGGWRDLSLKNIRYDQPGVAVNAGEVHLAVGLECLWKSSLCVNDLSLKDINVVIDSKKMPPGEQVEEEEESGPLNLSTPYPVTLSRVALENINVKIDDTTVSVMDFTSGLNWQEKNLTLKPTALQGLLIALPKVAEVAQEEVVEPKIQNPQPDEKPLGETLQDLFSKPVLPEMTDVHLPLNLNIEEFKGEQLRLTGDTDLTVFSLLLKVSSIDGNMKLDALDIDSSQGAVNATGTAQLANNWPVDITLNSTLNVEPLKGEKIKLKVGGALREQLEVGVNLSGPLDVNLRAQARLAEAGLPLNLEVVSEQISWPFTGDRQFQADNTRLKLTGKMTDYTLSMRTAVKGQDVPPATITLDAKGNEQQINLDKLTVAALEGKTELKALVDWRQAISWRGELTLDGINTAKEVPDWPSKLNGLIKTRGSLYGGSWQMEVPELKLTGNVKQNKVNVNGSLKGNSYMQWTIPGLHLVLGPNSADVKGELGVKDLNLDATIDAPGLDNALPGLGGTAKGLVKVRGTVDAPQLLADITARGLRWQELSIAQVRVDGDIKSTDQIAGKLDVRVERISQPDVNINLVTLHAKGSEKQHELQLRIQGEPVSGQLDLAGSFDREEMRWKGTLSNTRFRTPVGPWSQTRAIALDYRGQEQKISIGPHCWTNPNAELCVPQTIDAGAEGRAVVNLNRFDLAMLKPFMPETTQASGVFSGKADVAWDTTKEGLPQGNVTLSGRSVKVTQTVNDAPLPLAFDTLNVSADLHDNRAELGWQIRLSNNGQLDGQVQVTDPQGRRNLGGNVSIRNLNLAMVNPIFARGEKAAGLLNANLRLGGDVQSPQMFGQLQLNGVDIDGNFMPFDMQPSQLAMNFNGTRSTLTGVVRTQQGEINLSGDADWSQIENWRARIAAKGSRVRITVPPMVRLDVSPDVVFEATPSLFTLDGRVDVPWARIVVHELPESAVGVSSDEVMLNNQLQPEEPQTAAIPINSNLIVHVGNNVRMDAFGLRARLTGDLKVAQDKQGLGLNGQINIPEGRFHAYGQDLLVRKGELLFSGPPDQPILNIEAIRNPEATEDDVIAGVRVTGSADEPKAEIFSDPAMSQQEALSYLLRGQGLDSNQSDSAAMTSMLIGLGVAQSGQVVGKIGETFGVSNLALDTQGVGDSSQVVVSGYVLPGLQVKYGVGIFDSLATLTLRYRLMPKLYLEAVSGVDQALDLLYQFEF</sequence>
<accession>D2TN57</accession>
<reference key="1">
    <citation type="journal article" date="2010" name="J. Bacteriol.">
        <title>The Citrobacter rodentium genome sequence reveals convergent evolution with human pathogenic Escherichia coli.</title>
        <authorList>
            <person name="Petty N.K."/>
            <person name="Bulgin R."/>
            <person name="Crepin V.F."/>
            <person name="Cerdeno-Tarraga A.M."/>
            <person name="Schroeder G.N."/>
            <person name="Quail M.A."/>
            <person name="Lennard N."/>
            <person name="Corton C."/>
            <person name="Barron A."/>
            <person name="Clark L."/>
            <person name="Toribio A.L."/>
            <person name="Parkhill J."/>
            <person name="Dougan G."/>
            <person name="Frankel G."/>
            <person name="Thomson N.R."/>
        </authorList>
    </citation>
    <scope>NUCLEOTIDE SEQUENCE [LARGE SCALE GENOMIC DNA]</scope>
    <source>
        <strain>ICC168</strain>
    </source>
</reference>
<reference key="2">
    <citation type="journal article" date="2012" name="Nat. Struct. Mol. Biol.">
        <title>Discovery of an archetypal protein transport system in bacterial outer membranes.</title>
        <authorList>
            <person name="Selkrig J."/>
            <person name="Mosbahi K."/>
            <person name="Webb C.T."/>
            <person name="Belousoff M.J."/>
            <person name="Perry A.J."/>
            <person name="Wells T.J."/>
            <person name="Morris F."/>
            <person name="Leyton D.L."/>
            <person name="Totsika M."/>
            <person name="Phan M.D."/>
            <person name="Celik N."/>
            <person name="Kelly M."/>
            <person name="Oates C."/>
            <person name="Hartland E.L."/>
            <person name="Robins-Browne R.M."/>
            <person name="Ramarathinam S.H."/>
            <person name="Purcell A.W."/>
            <person name="Schembri M.A."/>
            <person name="Strugnell R.A."/>
            <person name="Henderson I.R."/>
            <person name="Walker D."/>
            <person name="Lithgow T."/>
        </authorList>
    </citation>
    <scope>FUNCTION IN SECRETION OF AUTOTRANSPORTERS</scope>
    <scope>SUBCELLULAR LOCATION</scope>
    <scope>DISRUPTION PHENOTYPE</scope>
    <source>
        <strain>ICC169</strain>
    </source>
</reference>
<comment type="function">
    <text evidence="1 2">Component of the translocation and assembly module (TAM), which facilitates the insertion and assembly of specific beta-barrel proteins into the outer membrane (By similarity). Promotes the secretion across the outer membrane of autotransporters such as p1121 (PubMed:22466966).</text>
</comment>
<comment type="function">
    <text evidence="1">In addition, is involved in outer membrane lipid homeostasis (By similarity). Likely transports phospholipids between the inner membrane and the outer membrane (By similarity).</text>
</comment>
<comment type="subunit">
    <text evidence="1">Interacts with TamA to form the translocation and assembly module (TAM).</text>
</comment>
<comment type="subcellular location">
    <subcellularLocation>
        <location evidence="2">Cell inner membrane</location>
        <topology evidence="2">Single-pass membrane protein</topology>
        <orientation evidence="1">Periplasmic side</orientation>
    </subcellularLocation>
</comment>
<comment type="disruption phenotype">
    <text evidence="2">50-fold reduction in ability to colonize mice in competitive assays with wild-type.</text>
</comment>
<comment type="similarity">
    <text evidence="3">Belongs to the TamB family.</text>
</comment>
<proteinExistence type="evidence at protein level"/>
<gene>
    <name type="primary">tamB</name>
    <name type="ordered locus">ROD_32821</name>
</gene>
<feature type="chain" id="PRO_5000565834" description="Translocation and assembly module subunit TamB">
    <location>
        <begin position="1"/>
        <end position="1259"/>
    </location>
</feature>
<feature type="topological domain" description="Cytoplasmic" evidence="1">
    <location>
        <begin position="1"/>
        <end position="6"/>
    </location>
</feature>
<feature type="transmembrane region" description="Helical; Signal-anchor for type II membrane protein" evidence="3">
    <location>
        <begin position="7"/>
        <end position="27"/>
    </location>
</feature>
<feature type="topological domain" description="Periplasmic" evidence="1">
    <location>
        <begin position="28"/>
        <end position="1259"/>
    </location>
</feature>
<evidence type="ECO:0000250" key="1">
    <source>
        <dbReference type="UniProtKB" id="P39321"/>
    </source>
</evidence>
<evidence type="ECO:0000269" key="2">
    <source>
    </source>
</evidence>
<evidence type="ECO:0000305" key="3"/>
<keyword id="KW-0997">Cell inner membrane</keyword>
<keyword id="KW-1003">Cell membrane</keyword>
<keyword id="KW-0472">Membrane</keyword>
<keyword id="KW-1185">Reference proteome</keyword>
<keyword id="KW-0735">Signal-anchor</keyword>
<keyword id="KW-0812">Transmembrane</keyword>
<keyword id="KW-1133">Transmembrane helix</keyword>
<keyword id="KW-0843">Virulence</keyword>
<name>TAMB_CITRI</name>
<dbReference type="EMBL" id="FN543502">
    <property type="protein sequence ID" value="CBG90001.1"/>
    <property type="molecule type" value="Genomic_DNA"/>
</dbReference>
<dbReference type="RefSeq" id="WP_012907369.1">
    <property type="nucleotide sequence ID" value="NC_013716.1"/>
</dbReference>
<dbReference type="SMR" id="D2TN57"/>
<dbReference type="DIP" id="DIP-59928N"/>
<dbReference type="IntAct" id="D2TN57">
    <property type="interactions" value="1"/>
</dbReference>
<dbReference type="STRING" id="637910.ROD_32821"/>
<dbReference type="KEGG" id="cro:ROD_32821"/>
<dbReference type="eggNOG" id="COG2911">
    <property type="taxonomic scope" value="Bacteria"/>
</dbReference>
<dbReference type="HOGENOM" id="CLU_002338_0_1_6"/>
<dbReference type="OrthoDB" id="5555605at2"/>
<dbReference type="Proteomes" id="UP000001889">
    <property type="component" value="Chromosome"/>
</dbReference>
<dbReference type="GO" id="GO:0005886">
    <property type="term" value="C:plasma membrane"/>
    <property type="evidence" value="ECO:0007669"/>
    <property type="project" value="UniProtKB-SubCell"/>
</dbReference>
<dbReference type="GO" id="GO:0097347">
    <property type="term" value="C:TAM protein secretion complex"/>
    <property type="evidence" value="ECO:0007669"/>
    <property type="project" value="TreeGrafter"/>
</dbReference>
<dbReference type="GO" id="GO:0009306">
    <property type="term" value="P:protein secretion"/>
    <property type="evidence" value="ECO:0007669"/>
    <property type="project" value="InterPro"/>
</dbReference>
<dbReference type="InterPro" id="IPR007452">
    <property type="entry name" value="TamB"/>
</dbReference>
<dbReference type="PANTHER" id="PTHR36985">
    <property type="entry name" value="TRANSLOCATION AND ASSEMBLY MODULE SUBUNIT TAMB"/>
    <property type="match status" value="1"/>
</dbReference>
<dbReference type="PANTHER" id="PTHR36985:SF1">
    <property type="entry name" value="TRANSLOCATION AND ASSEMBLY MODULE SUBUNIT TAMB"/>
    <property type="match status" value="1"/>
</dbReference>
<dbReference type="Pfam" id="PF04357">
    <property type="entry name" value="TamB"/>
    <property type="match status" value="1"/>
</dbReference>
<protein>
    <recommendedName>
        <fullName evidence="3">Translocation and assembly module subunit TamB</fullName>
    </recommendedName>
    <alternativeName>
        <fullName>Autotransporter assembly factor TamB</fullName>
    </alternativeName>
    <alternativeName>
        <fullName evidence="1">Intermembrane phospholipid transporter TamB</fullName>
    </alternativeName>
</protein>